<proteinExistence type="inferred from homology"/>
<feature type="chain" id="PRO_1000213017" description="Large ribosomal subunit protein eL32">
    <location>
        <begin position="1"/>
        <end position="127"/>
    </location>
</feature>
<feature type="region of interest" description="Disordered" evidence="2">
    <location>
        <begin position="37"/>
        <end position="65"/>
    </location>
</feature>
<feature type="compositionally biased region" description="Basic and acidic residues" evidence="2">
    <location>
        <begin position="37"/>
        <end position="48"/>
    </location>
</feature>
<reference key="1">
    <citation type="journal article" date="2009" name="Appl. Environ. Microbiol.">
        <title>Metabolic versatility and indigenous origin of the archaeon Thermococcus sibiricus, isolated from a siberian oil reservoir, as revealed by genome analysis.</title>
        <authorList>
            <person name="Mardanov A.V."/>
            <person name="Ravin N.V."/>
            <person name="Svetlitchnyi V.A."/>
            <person name="Beletsky A.V."/>
            <person name="Miroshnichenko M.L."/>
            <person name="Bonch-Osmolovskaya E.A."/>
            <person name="Skryabin K.G."/>
        </authorList>
    </citation>
    <scope>NUCLEOTIDE SEQUENCE [LARGE SCALE GENOMIC DNA]</scope>
    <source>
        <strain>DSM 12597 / MM 739</strain>
    </source>
</reference>
<accession>C6A177</accession>
<dbReference type="EMBL" id="CP001463">
    <property type="protein sequence ID" value="ACS89372.1"/>
    <property type="molecule type" value="Genomic_DNA"/>
</dbReference>
<dbReference type="RefSeq" id="WP_015848592.1">
    <property type="nucleotide sequence ID" value="NC_012883.1"/>
</dbReference>
<dbReference type="SMR" id="C6A177"/>
<dbReference type="STRING" id="604354.TSIB_0306"/>
<dbReference type="GeneID" id="8095279"/>
<dbReference type="KEGG" id="tsi:TSIB_0306"/>
<dbReference type="eggNOG" id="arCOG00781">
    <property type="taxonomic scope" value="Archaea"/>
</dbReference>
<dbReference type="HOGENOM" id="CLU_071479_3_1_2"/>
<dbReference type="OrthoDB" id="372100at2157"/>
<dbReference type="Proteomes" id="UP000009079">
    <property type="component" value="Chromosome"/>
</dbReference>
<dbReference type="GO" id="GO:0022625">
    <property type="term" value="C:cytosolic large ribosomal subunit"/>
    <property type="evidence" value="ECO:0007669"/>
    <property type="project" value="TreeGrafter"/>
</dbReference>
<dbReference type="GO" id="GO:0003735">
    <property type="term" value="F:structural constituent of ribosome"/>
    <property type="evidence" value="ECO:0007669"/>
    <property type="project" value="InterPro"/>
</dbReference>
<dbReference type="GO" id="GO:0006412">
    <property type="term" value="P:translation"/>
    <property type="evidence" value="ECO:0007669"/>
    <property type="project" value="UniProtKB-UniRule"/>
</dbReference>
<dbReference type="CDD" id="cd00513">
    <property type="entry name" value="Ribosomal_L32_L32e"/>
    <property type="match status" value="1"/>
</dbReference>
<dbReference type="HAMAP" id="MF_00810">
    <property type="entry name" value="Ribosomal_eL32"/>
    <property type="match status" value="1"/>
</dbReference>
<dbReference type="InterPro" id="IPR001515">
    <property type="entry name" value="Ribosomal_eL32"/>
</dbReference>
<dbReference type="InterPro" id="IPR023654">
    <property type="entry name" value="Ribosomal_eL32_arc"/>
</dbReference>
<dbReference type="InterPro" id="IPR018263">
    <property type="entry name" value="Ribosomal_eL32_CS"/>
</dbReference>
<dbReference type="InterPro" id="IPR036351">
    <property type="entry name" value="Ribosomal_eL32_sf"/>
</dbReference>
<dbReference type="NCBIfam" id="NF006332">
    <property type="entry name" value="PRK08562.1"/>
    <property type="match status" value="1"/>
</dbReference>
<dbReference type="PANTHER" id="PTHR23413">
    <property type="entry name" value="60S RIBOSOMAL PROTEIN L32 AND DNA-DIRECTED RNA POLYMERASE II, SUBUNIT N"/>
    <property type="match status" value="1"/>
</dbReference>
<dbReference type="PANTHER" id="PTHR23413:SF1">
    <property type="entry name" value="RIBOSOMAL PROTEIN L32"/>
    <property type="match status" value="1"/>
</dbReference>
<dbReference type="Pfam" id="PF01655">
    <property type="entry name" value="Ribosomal_L32e"/>
    <property type="match status" value="1"/>
</dbReference>
<dbReference type="SMART" id="SM01393">
    <property type="entry name" value="Ribosomal_L32e"/>
    <property type="match status" value="1"/>
</dbReference>
<dbReference type="SUPFAM" id="SSF52042">
    <property type="entry name" value="Ribosomal protein L32e"/>
    <property type="match status" value="1"/>
</dbReference>
<dbReference type="PROSITE" id="PS00580">
    <property type="entry name" value="RIBOSOMAL_L32E"/>
    <property type="match status" value="1"/>
</dbReference>
<keyword id="KW-1185">Reference proteome</keyword>
<keyword id="KW-0687">Ribonucleoprotein</keyword>
<keyword id="KW-0689">Ribosomal protein</keyword>
<protein>
    <recommendedName>
        <fullName evidence="1">Large ribosomal subunit protein eL32</fullName>
    </recommendedName>
    <alternativeName>
        <fullName evidence="3">50S ribosomal protein L32e</fullName>
    </alternativeName>
</protein>
<name>RL32_THESM</name>
<evidence type="ECO:0000255" key="1">
    <source>
        <dbReference type="HAMAP-Rule" id="MF_00810"/>
    </source>
</evidence>
<evidence type="ECO:0000256" key="2">
    <source>
        <dbReference type="SAM" id="MobiDB-lite"/>
    </source>
</evidence>
<evidence type="ECO:0000305" key="3"/>
<comment type="similarity">
    <text evidence="1">Belongs to the eukaryotic ribosomal protein eL32 family.</text>
</comment>
<gene>
    <name evidence="1" type="primary">rpl32e</name>
    <name type="ordered locus">TSIB_0306</name>
</gene>
<sequence>MNEKVRLLKIRAKIKRKKPKFLRQEWWRFPKFKNDPKWRKPKGTDSKMRVKLKGKARSPSIGWSSPKAVRGLHPSGYEEVLVYNVKDLELIDSKRQAARIAATVGKKKRIMIIERARELGIKVLNAR</sequence>
<organism>
    <name type="scientific">Thermococcus sibiricus (strain DSM 12597 / MM 739)</name>
    <dbReference type="NCBI Taxonomy" id="604354"/>
    <lineage>
        <taxon>Archaea</taxon>
        <taxon>Methanobacteriati</taxon>
        <taxon>Methanobacteriota</taxon>
        <taxon>Thermococci</taxon>
        <taxon>Thermococcales</taxon>
        <taxon>Thermococcaceae</taxon>
        <taxon>Thermococcus</taxon>
    </lineage>
</organism>